<gene>
    <name type="primary">OPG056</name>
    <name type="ORF">F12L</name>
    <name type="ORF">F6</name>
</gene>
<accession>P29889</accession>
<accession>Q85335</accession>
<keyword id="KW-0244">Early protein</keyword>
<keyword id="KW-1039">Host endosome</keyword>
<keyword id="KW-0945">Host-virus interaction</keyword>
<keyword id="KW-0426">Late protein</keyword>
<keyword id="KW-0472">Membrane</keyword>
<keyword id="KW-1189">Microtubular outwards viral transport</keyword>
<keyword id="KW-1188">Viral release from host cell</keyword>
<keyword id="KW-0946">Virion</keyword>
<keyword id="KW-0843">Virulence</keyword>
<evidence type="ECO:0000250" key="1">
    <source>
        <dbReference type="UniProtKB" id="Q80HX6"/>
    </source>
</evidence>
<evidence type="ECO:0000305" key="2"/>
<proteinExistence type="inferred from homology"/>
<comment type="function">
    <text evidence="1">Plays a role in intracellular enveloped virus (IEV) transport to the cell surface through microtubule transport. Together with protein OPG064, forms a complex that interacts with host KLC2 (kinesin light chain isoform 2) to engage the kinesin-1 complex and thereby promote IEV trafficking.</text>
</comment>
<comment type="subunit">
    <text evidence="1">Interacts with protein OPG164. Interacts with protein OPG064.</text>
</comment>
<comment type="subcellular location">
    <subcellularLocation>
        <location evidence="1">Virion membrane</location>
    </subcellularLocation>
    <subcellularLocation>
        <location evidence="1">Host endosome</location>
    </subcellularLocation>
    <text evidence="1">Associates with the membrane of IEV particles, but not intracellular mature virus (IMV), cell-associated enveloped virus (CEV) or EEV. Colocalizes with microtubules.</text>
</comment>
<comment type="induction">
    <text evidence="1">Expressed in the early phase of the viral replicative cycle.</text>
</comment>
<comment type="similarity">
    <text evidence="2">Belongs to the orthopoxvirus OPG056 family.</text>
</comment>
<comment type="sequence caution" evidence="2">
    <conflict type="erroneous initiation">
        <sequence resource="EMBL-CDS" id="AAA48286"/>
    </conflict>
</comment>
<name>PG056_VACCP</name>
<sequence>MLNRIQTLMKTANNYETIEVLRNYLRLYIILARNEEGHGILIYDDNIDSIMSMMNITRLEVIGLTTHCTKLRSSPPIPMSRLFMDEIDHESYYSPKTSDYPLIDIIRKRSHEQGDIALALERYGIENTDSISEINEWLSSKGLACYRFVKFNDYRKQMYRKFPRCTIVDSMIIGHIGHHYIWIKNLETYTRPEIDVLPFDIKYISRDELWARISSSLDQTHIKTIAVSVYGAITDNGPMPYMISTYPGNTFVNFNSVKNLILNFLDWIKDIMTSTRTIILVGYMSNLFDIPLLTVYWPNNCGWKIYNNTLISSDGARVIWMDAYKFSCGLSLQDYCYHWGSKPESRPFDLIKKSDAKRNSKSLVKESMASLKSLYEAFETQSGASEVLMSPCRTFSFSRTEDTFSTSVINRVFENTGTGTYHPINDIPSLFIESSICLDHIIVNNQESNKYRIKSVLDIISSKQYPARRPNYVKNGTKGKLYIALCKVTVPTNDHIPVVYHDDDNTTTFITVLTSVDIETAIRVGYSIVELGALQWDNNIPELKNGLLDSIKMIYDLNAVTTNNLLEQLIENINFNNSSIISLFYTFAISYCRAFIYSIMETIDPVYISQFSYKELYVSSSYKDINESMSQMVKL</sequence>
<dbReference type="EMBL" id="M57977">
    <property type="protein sequence ID" value="AAA48285.1"/>
    <property type="molecule type" value="Genomic_DNA"/>
</dbReference>
<dbReference type="EMBL" id="M57977">
    <property type="protein sequence ID" value="AAA48286.1"/>
    <property type="status" value="ALT_INIT"/>
    <property type="molecule type" value="Genomic_DNA"/>
</dbReference>
<dbReference type="IntAct" id="P29889">
    <property type="interactions" value="1"/>
</dbReference>
<dbReference type="GO" id="GO:0043657">
    <property type="term" value="C:host cell"/>
    <property type="evidence" value="ECO:0007669"/>
    <property type="project" value="GOC"/>
</dbReference>
<dbReference type="GO" id="GO:0044174">
    <property type="term" value="C:host cell endosome"/>
    <property type="evidence" value="ECO:0007669"/>
    <property type="project" value="UniProtKB-SubCell"/>
</dbReference>
<dbReference type="GO" id="GO:0016020">
    <property type="term" value="C:membrane"/>
    <property type="evidence" value="ECO:0007669"/>
    <property type="project" value="UniProtKB-KW"/>
</dbReference>
<dbReference type="GO" id="GO:0055036">
    <property type="term" value="C:virion membrane"/>
    <property type="evidence" value="ECO:0007669"/>
    <property type="project" value="UniProtKB-SubCell"/>
</dbReference>
<dbReference type="GO" id="GO:0039701">
    <property type="term" value="P:microtubule-dependent intracellular transport of viral material towards cell periphery"/>
    <property type="evidence" value="ECO:0007669"/>
    <property type="project" value="UniProtKB-KW"/>
</dbReference>
<dbReference type="InterPro" id="IPR005005">
    <property type="entry name" value="Poxvirus_F12L"/>
</dbReference>
<dbReference type="InterPro" id="IPR012337">
    <property type="entry name" value="RNaseH-like_sf"/>
</dbReference>
<dbReference type="Pfam" id="PF03337">
    <property type="entry name" value="Pox_F12L"/>
    <property type="match status" value="1"/>
</dbReference>
<dbReference type="PIRSF" id="PIRSF015793">
    <property type="entry name" value="VAC_EEV"/>
    <property type="match status" value="1"/>
</dbReference>
<dbReference type="SUPFAM" id="SSF53098">
    <property type="entry name" value="Ribonuclease H-like"/>
    <property type="match status" value="1"/>
</dbReference>
<protein>
    <recommendedName>
        <fullName>Protein OPG056</fullName>
    </recommendedName>
    <alternativeName>
        <fullName>Protein F12</fullName>
    </alternativeName>
    <alternativeName>
        <fullName>Protein F6</fullName>
    </alternativeName>
</protein>
<reference key="1">
    <citation type="journal article" date="1988" name="Biotekhnologiya">
        <title>Structural-functional organization of segment of vaccinia virus genome.</title>
        <authorList>
            <person name="Mikryukov N.N."/>
            <person name="Chizhikov V.E."/>
            <person name="Prikhod'Ko G.G."/>
            <person name="Urmmanov I.M."/>
            <person name="Serpinskii O.I."/>
            <person name="Blinov V.M."/>
            <person name="Nikulin A.E."/>
            <person name="Vasilenko S.K."/>
        </authorList>
    </citation>
    <scope>NUCLEOTIDE SEQUENCE [GENOMIC DNA]</scope>
</reference>
<feature type="chain" id="PRO_0000099503" description="Protein OPG056">
    <location>
        <begin position="1"/>
        <end position="635"/>
    </location>
</feature>
<organismHost>
    <name type="scientific">Homo sapiens</name>
    <name type="common">Human</name>
    <dbReference type="NCBI Taxonomy" id="9606"/>
</organismHost>
<organism>
    <name type="scientific">Vaccinia virus (strain L-IVP)</name>
    <name type="common">VACV</name>
    <dbReference type="NCBI Taxonomy" id="31531"/>
    <lineage>
        <taxon>Viruses</taxon>
        <taxon>Varidnaviria</taxon>
        <taxon>Bamfordvirae</taxon>
        <taxon>Nucleocytoviricota</taxon>
        <taxon>Pokkesviricetes</taxon>
        <taxon>Chitovirales</taxon>
        <taxon>Poxviridae</taxon>
        <taxon>Chordopoxvirinae</taxon>
        <taxon>Orthopoxvirus</taxon>
        <taxon>Vaccinia virus</taxon>
    </lineage>
</organism>